<feature type="chain" id="PRO_0000129959" description="Small ribosomal subunit protein uS19c">
    <location>
        <begin position="1"/>
        <end position="92"/>
    </location>
</feature>
<accession>P56366</accession>
<gene>
    <name type="primary">rps19</name>
</gene>
<dbReference type="EMBL" id="AB001684">
    <property type="protein sequence ID" value="BAA58007.1"/>
    <property type="molecule type" value="Genomic_DNA"/>
</dbReference>
<dbReference type="PIR" id="T07359">
    <property type="entry name" value="T07359"/>
</dbReference>
<dbReference type="RefSeq" id="NP_045931.1">
    <property type="nucleotide sequence ID" value="NC_001865.1"/>
</dbReference>
<dbReference type="SMR" id="P56366"/>
<dbReference type="GeneID" id="809144"/>
<dbReference type="OrthoDB" id="2043at2759"/>
<dbReference type="GO" id="GO:0009507">
    <property type="term" value="C:chloroplast"/>
    <property type="evidence" value="ECO:0007669"/>
    <property type="project" value="UniProtKB-SubCell"/>
</dbReference>
<dbReference type="GO" id="GO:0005763">
    <property type="term" value="C:mitochondrial small ribosomal subunit"/>
    <property type="evidence" value="ECO:0007669"/>
    <property type="project" value="TreeGrafter"/>
</dbReference>
<dbReference type="GO" id="GO:0019843">
    <property type="term" value="F:rRNA binding"/>
    <property type="evidence" value="ECO:0007669"/>
    <property type="project" value="UniProtKB-UniRule"/>
</dbReference>
<dbReference type="GO" id="GO:0003735">
    <property type="term" value="F:structural constituent of ribosome"/>
    <property type="evidence" value="ECO:0007669"/>
    <property type="project" value="InterPro"/>
</dbReference>
<dbReference type="GO" id="GO:0000028">
    <property type="term" value="P:ribosomal small subunit assembly"/>
    <property type="evidence" value="ECO:0007669"/>
    <property type="project" value="TreeGrafter"/>
</dbReference>
<dbReference type="GO" id="GO:0006412">
    <property type="term" value="P:translation"/>
    <property type="evidence" value="ECO:0007669"/>
    <property type="project" value="UniProtKB-UniRule"/>
</dbReference>
<dbReference type="FunFam" id="3.30.860.10:FF:000001">
    <property type="entry name" value="30S ribosomal protein S19"/>
    <property type="match status" value="1"/>
</dbReference>
<dbReference type="Gene3D" id="3.30.860.10">
    <property type="entry name" value="30s Ribosomal Protein S19, Chain A"/>
    <property type="match status" value="1"/>
</dbReference>
<dbReference type="HAMAP" id="MF_00531">
    <property type="entry name" value="Ribosomal_uS19"/>
    <property type="match status" value="1"/>
</dbReference>
<dbReference type="InterPro" id="IPR002222">
    <property type="entry name" value="Ribosomal_uS19"/>
</dbReference>
<dbReference type="InterPro" id="IPR005732">
    <property type="entry name" value="Ribosomal_uS19_bac-type"/>
</dbReference>
<dbReference type="InterPro" id="IPR020934">
    <property type="entry name" value="Ribosomal_uS19_CS"/>
</dbReference>
<dbReference type="InterPro" id="IPR023575">
    <property type="entry name" value="Ribosomal_uS19_SF"/>
</dbReference>
<dbReference type="NCBIfam" id="TIGR01050">
    <property type="entry name" value="rpsS_bact"/>
    <property type="match status" value="1"/>
</dbReference>
<dbReference type="PANTHER" id="PTHR11880">
    <property type="entry name" value="RIBOSOMAL PROTEIN S19P FAMILY MEMBER"/>
    <property type="match status" value="1"/>
</dbReference>
<dbReference type="PANTHER" id="PTHR11880:SF8">
    <property type="entry name" value="SMALL RIBOSOMAL SUBUNIT PROTEIN US19M"/>
    <property type="match status" value="1"/>
</dbReference>
<dbReference type="Pfam" id="PF00203">
    <property type="entry name" value="Ribosomal_S19"/>
    <property type="match status" value="1"/>
</dbReference>
<dbReference type="PIRSF" id="PIRSF002144">
    <property type="entry name" value="Ribosomal_S19"/>
    <property type="match status" value="1"/>
</dbReference>
<dbReference type="PRINTS" id="PR00975">
    <property type="entry name" value="RIBOSOMALS19"/>
</dbReference>
<dbReference type="SUPFAM" id="SSF54570">
    <property type="entry name" value="Ribosomal protein S19"/>
    <property type="match status" value="1"/>
</dbReference>
<dbReference type="PROSITE" id="PS00323">
    <property type="entry name" value="RIBOSOMAL_S19"/>
    <property type="match status" value="1"/>
</dbReference>
<evidence type="ECO:0000250" key="1"/>
<evidence type="ECO:0000305" key="2"/>
<comment type="function">
    <text evidence="1">Protein S19 forms a complex with S13 that binds strongly to the 16S ribosomal RNA.</text>
</comment>
<comment type="subcellular location">
    <subcellularLocation>
        <location>Plastid</location>
        <location>Chloroplast</location>
    </subcellularLocation>
</comment>
<comment type="similarity">
    <text evidence="2">Belongs to the universal ribosomal protein uS19 family.</text>
</comment>
<name>RR19_CHLVU</name>
<protein>
    <recommendedName>
        <fullName evidence="2">Small ribosomal subunit protein uS19c</fullName>
    </recommendedName>
    <alternativeName>
        <fullName>30S ribosomal protein S19, chloroplastic</fullName>
    </alternativeName>
</protein>
<organism>
    <name type="scientific">Chlorella vulgaris</name>
    <name type="common">Green alga</name>
    <dbReference type="NCBI Taxonomy" id="3077"/>
    <lineage>
        <taxon>Eukaryota</taxon>
        <taxon>Viridiplantae</taxon>
        <taxon>Chlorophyta</taxon>
        <taxon>core chlorophytes</taxon>
        <taxon>Trebouxiophyceae</taxon>
        <taxon>Chlorellales</taxon>
        <taxon>Chlorellaceae</taxon>
        <taxon>Chlorella clade</taxon>
        <taxon>Chlorella</taxon>
    </lineage>
</organism>
<keyword id="KW-0150">Chloroplast</keyword>
<keyword id="KW-0934">Plastid</keyword>
<keyword id="KW-0687">Ribonucleoprotein</keyword>
<keyword id="KW-0689">Ribosomal protein</keyword>
<keyword id="KW-0694">RNA-binding</keyword>
<keyword id="KW-0699">rRNA-binding</keyword>
<reference key="1">
    <citation type="journal article" date="1997" name="Proc. Natl. Acad. Sci. U.S.A.">
        <title>Complete nucleotide sequence of the chloroplast genome from the green alga Chlorella vulgaris: the existence of genes possibly involved in chloroplast division.</title>
        <authorList>
            <person name="Wakasugi T."/>
            <person name="Nagai T."/>
            <person name="Kapoor M."/>
            <person name="Sugita M."/>
            <person name="Ito M."/>
            <person name="Ito S."/>
            <person name="Tsudzuki J."/>
            <person name="Nakashima K."/>
            <person name="Tsudzuki T."/>
            <person name="Suzuki Y."/>
            <person name="Hamada A."/>
            <person name="Ohta T."/>
            <person name="Inamura A."/>
            <person name="Yoshinaga K."/>
            <person name="Sugiura M."/>
        </authorList>
    </citation>
    <scope>NUCLEOTIDE SEQUENCE [LARGE SCALE GENOMIC DNA]</scope>
    <source>
        <strain>IAM C-27 / Tamiya</strain>
    </source>
</reference>
<geneLocation type="chloroplast"/>
<sequence>MARSLKKAPFVANHLLEKVERLNTQGDKKVIKTWSRSSTIVPLMIGHTIAVHNGREHIPVFITDQMVGHKLGEFAPTRTFRGHVKKDKKSKR</sequence>
<proteinExistence type="inferred from homology"/>